<feature type="chain" id="PRO_0000164770" description="Gene 45 protein">
    <location>
        <begin position="1"/>
        <end position="97"/>
    </location>
</feature>
<reference key="1">
    <citation type="journal article" date="1993" name="Mol. Microbiol.">
        <title>DNA sequence, structure and gene expression of mycobacteriophage L5: a phage system for mycobacterial genetics.</title>
        <authorList>
            <person name="Hatfull G.F."/>
            <person name="Sarkis G.J."/>
        </authorList>
    </citation>
    <scope>NUCLEOTIDE SEQUENCE [LARGE SCALE GENOMIC DNA]</scope>
</reference>
<organismHost>
    <name type="scientific">Mycobacterium</name>
    <dbReference type="NCBI Taxonomy" id="1763"/>
</organismHost>
<protein>
    <recommendedName>
        <fullName>Gene 45 protein</fullName>
    </recommendedName>
    <alternativeName>
        <fullName>Gp45</fullName>
    </alternativeName>
</protein>
<dbReference type="EMBL" id="Z18946">
    <property type="protein sequence ID" value="CAA79421.1"/>
    <property type="molecule type" value="Genomic_DNA"/>
</dbReference>
<dbReference type="PIR" id="S30990">
    <property type="entry name" value="S30990"/>
</dbReference>
<dbReference type="RefSeq" id="NP_039709.1">
    <property type="nucleotide sequence ID" value="NC_001335.1"/>
</dbReference>
<dbReference type="GeneID" id="2942960"/>
<dbReference type="KEGG" id="vg:2942960"/>
<dbReference type="OrthoDB" id="23910at10239"/>
<dbReference type="Proteomes" id="UP000002123">
    <property type="component" value="Genome"/>
</dbReference>
<keyword id="KW-1185">Reference proteome</keyword>
<organism>
    <name type="scientific">Mycobacterium phage L5</name>
    <name type="common">Mycobacteriophage L5</name>
    <dbReference type="NCBI Taxonomy" id="31757"/>
    <lineage>
        <taxon>Viruses</taxon>
        <taxon>Duplodnaviria</taxon>
        <taxon>Heunggongvirae</taxon>
        <taxon>Uroviricota</taxon>
        <taxon>Caudoviricetes</taxon>
        <taxon>Fromanvirus</taxon>
    </lineage>
</organism>
<name>VG45_BPML5</name>
<sequence>MKIKDVERYTIPLDVPYGGEALPDGKAPTGTTVEELIKALKKLPPKGLVSHDFGGNSRIIVTHYKPDIDPDCPFEAAMQQAIKEMASATWIPPQYFQ</sequence>
<accession>Q05256</accession>
<proteinExistence type="predicted"/>
<gene>
    <name type="primary">45</name>
</gene>